<keyword id="KW-1185">Reference proteome</keyword>
<keyword id="KW-0687">Ribonucleoprotein</keyword>
<keyword id="KW-0689">Ribosomal protein</keyword>
<proteinExistence type="inferred from homology"/>
<feature type="chain" id="PRO_1000121461" description="Large ribosomal subunit protein bL12">
    <location>
        <begin position="1"/>
        <end position="129"/>
    </location>
</feature>
<dbReference type="EMBL" id="CU458896">
    <property type="protein sequence ID" value="CAM63950.1"/>
    <property type="molecule type" value="Genomic_DNA"/>
</dbReference>
<dbReference type="RefSeq" id="WP_005055422.1">
    <property type="nucleotide sequence ID" value="NZ_MLCG01000001.1"/>
</dbReference>
<dbReference type="SMR" id="B1MH69"/>
<dbReference type="GeneID" id="93380814"/>
<dbReference type="KEGG" id="mab:MAB_3876c"/>
<dbReference type="Proteomes" id="UP000007137">
    <property type="component" value="Chromosome"/>
</dbReference>
<dbReference type="GO" id="GO:0022625">
    <property type="term" value="C:cytosolic large ribosomal subunit"/>
    <property type="evidence" value="ECO:0007669"/>
    <property type="project" value="TreeGrafter"/>
</dbReference>
<dbReference type="GO" id="GO:0003729">
    <property type="term" value="F:mRNA binding"/>
    <property type="evidence" value="ECO:0007669"/>
    <property type="project" value="TreeGrafter"/>
</dbReference>
<dbReference type="GO" id="GO:0003735">
    <property type="term" value="F:structural constituent of ribosome"/>
    <property type="evidence" value="ECO:0007669"/>
    <property type="project" value="InterPro"/>
</dbReference>
<dbReference type="GO" id="GO:0006412">
    <property type="term" value="P:translation"/>
    <property type="evidence" value="ECO:0007669"/>
    <property type="project" value="UniProtKB-UniRule"/>
</dbReference>
<dbReference type="CDD" id="cd00387">
    <property type="entry name" value="Ribosomal_L7_L12"/>
    <property type="match status" value="1"/>
</dbReference>
<dbReference type="FunFam" id="1.20.5.710:FF:000005">
    <property type="entry name" value="50S ribosomal protein L7/L12"/>
    <property type="match status" value="1"/>
</dbReference>
<dbReference type="FunFam" id="3.30.1390.10:FF:000001">
    <property type="entry name" value="50S ribosomal protein L7/L12"/>
    <property type="match status" value="1"/>
</dbReference>
<dbReference type="Gene3D" id="3.30.1390.10">
    <property type="match status" value="1"/>
</dbReference>
<dbReference type="Gene3D" id="1.20.5.710">
    <property type="entry name" value="Single helix bin"/>
    <property type="match status" value="1"/>
</dbReference>
<dbReference type="HAMAP" id="MF_00368">
    <property type="entry name" value="Ribosomal_bL12"/>
    <property type="match status" value="1"/>
</dbReference>
<dbReference type="InterPro" id="IPR000206">
    <property type="entry name" value="Ribosomal_bL12"/>
</dbReference>
<dbReference type="InterPro" id="IPR013823">
    <property type="entry name" value="Ribosomal_bL12_C"/>
</dbReference>
<dbReference type="InterPro" id="IPR014719">
    <property type="entry name" value="Ribosomal_bL12_C/ClpS-like"/>
</dbReference>
<dbReference type="InterPro" id="IPR008932">
    <property type="entry name" value="Ribosomal_bL12_oligo"/>
</dbReference>
<dbReference type="InterPro" id="IPR036235">
    <property type="entry name" value="Ribosomal_bL12_oligo_N_sf"/>
</dbReference>
<dbReference type="NCBIfam" id="TIGR00855">
    <property type="entry name" value="L12"/>
    <property type="match status" value="1"/>
</dbReference>
<dbReference type="PANTHER" id="PTHR45987">
    <property type="entry name" value="39S RIBOSOMAL PROTEIN L12"/>
    <property type="match status" value="1"/>
</dbReference>
<dbReference type="PANTHER" id="PTHR45987:SF4">
    <property type="entry name" value="LARGE RIBOSOMAL SUBUNIT PROTEIN BL12M"/>
    <property type="match status" value="1"/>
</dbReference>
<dbReference type="Pfam" id="PF00542">
    <property type="entry name" value="Ribosomal_L12"/>
    <property type="match status" value="1"/>
</dbReference>
<dbReference type="Pfam" id="PF16320">
    <property type="entry name" value="Ribosomal_L12_N"/>
    <property type="match status" value="1"/>
</dbReference>
<dbReference type="SUPFAM" id="SSF54736">
    <property type="entry name" value="ClpS-like"/>
    <property type="match status" value="1"/>
</dbReference>
<dbReference type="SUPFAM" id="SSF48300">
    <property type="entry name" value="Ribosomal protein L7/12, oligomerisation (N-terminal) domain"/>
    <property type="match status" value="1"/>
</dbReference>
<comment type="function">
    <text evidence="1">Forms part of the ribosomal stalk which helps the ribosome interact with GTP-bound translation factors. Is thus essential for accurate translation.</text>
</comment>
<comment type="subunit">
    <text evidence="1">Homodimer. Part of the ribosomal stalk of the 50S ribosomal subunit. Forms a multimeric L10(L12)X complex, where L10 forms an elongated spine to which 2 to 4 L12 dimers bind in a sequential fashion. Binds GTP-bound translation factors.</text>
</comment>
<comment type="similarity">
    <text evidence="1">Belongs to the bacterial ribosomal protein bL12 family.</text>
</comment>
<organism>
    <name type="scientific">Mycobacteroides abscessus (strain ATCC 19977 / DSM 44196 / CCUG 20993 / CIP 104536 / JCM 13569 / NCTC 13031 / TMC 1543 / L948)</name>
    <name type="common">Mycobacterium abscessus</name>
    <dbReference type="NCBI Taxonomy" id="561007"/>
    <lineage>
        <taxon>Bacteria</taxon>
        <taxon>Bacillati</taxon>
        <taxon>Actinomycetota</taxon>
        <taxon>Actinomycetes</taxon>
        <taxon>Mycobacteriales</taxon>
        <taxon>Mycobacteriaceae</taxon>
        <taxon>Mycobacteroides</taxon>
        <taxon>Mycobacteroides abscessus</taxon>
    </lineage>
</organism>
<sequence>MAKLSTEELLDAFAELTLLELSEFVKAFEEKFEVTAAAPVAVAAVGGAAPAAADAAEEQSEFDVILESAGDKKIGVIKVVREIVSGLGLKEAKDLVDGAPKPLLEKVAKEAADDAKAKLEAAGATVTVK</sequence>
<reference key="1">
    <citation type="journal article" date="2009" name="PLoS ONE">
        <title>Non mycobacterial virulence genes in the genome of the emerging pathogen Mycobacterium abscessus.</title>
        <authorList>
            <person name="Ripoll F."/>
            <person name="Pasek S."/>
            <person name="Schenowitz C."/>
            <person name="Dossat C."/>
            <person name="Barbe V."/>
            <person name="Rottman M."/>
            <person name="Macheras E."/>
            <person name="Heym B."/>
            <person name="Herrmann J.L."/>
            <person name="Daffe M."/>
            <person name="Brosch R."/>
            <person name="Risler J.L."/>
            <person name="Gaillard J.L."/>
        </authorList>
    </citation>
    <scope>NUCLEOTIDE SEQUENCE [LARGE SCALE GENOMIC DNA]</scope>
    <source>
        <strain>ATCC 19977 / DSM 44196 / CCUG 20993 / CIP 104536 / JCM 13569 / NCTC 13031 / TMC 1543 / L948</strain>
    </source>
</reference>
<name>RL7_MYCA9</name>
<protein>
    <recommendedName>
        <fullName evidence="1">Large ribosomal subunit protein bL12</fullName>
    </recommendedName>
    <alternativeName>
        <fullName evidence="2">50S ribosomal protein L7/L12</fullName>
    </alternativeName>
</protein>
<gene>
    <name evidence="1" type="primary">rplL</name>
    <name type="ordered locus">MAB_3876c</name>
</gene>
<accession>B1MH69</accession>
<evidence type="ECO:0000255" key="1">
    <source>
        <dbReference type="HAMAP-Rule" id="MF_00368"/>
    </source>
</evidence>
<evidence type="ECO:0000305" key="2"/>